<proteinExistence type="inferred from homology"/>
<evidence type="ECO:0000255" key="1">
    <source>
        <dbReference type="HAMAP-Rule" id="MF_00372"/>
    </source>
</evidence>
<reference key="1">
    <citation type="submission" date="2006-08" db="EMBL/GenBank/DDBJ databases">
        <title>Complete sequence of Shewanella sp. MR-4.</title>
        <authorList>
            <consortium name="US DOE Joint Genome Institute"/>
            <person name="Copeland A."/>
            <person name="Lucas S."/>
            <person name="Lapidus A."/>
            <person name="Barry K."/>
            <person name="Detter J.C."/>
            <person name="Glavina del Rio T."/>
            <person name="Hammon N."/>
            <person name="Israni S."/>
            <person name="Dalin E."/>
            <person name="Tice H."/>
            <person name="Pitluck S."/>
            <person name="Kiss H."/>
            <person name="Brettin T."/>
            <person name="Bruce D."/>
            <person name="Han C."/>
            <person name="Tapia R."/>
            <person name="Gilna P."/>
            <person name="Schmutz J."/>
            <person name="Larimer F."/>
            <person name="Land M."/>
            <person name="Hauser L."/>
            <person name="Kyrpides N."/>
            <person name="Mikhailova N."/>
            <person name="Nealson K."/>
            <person name="Konstantinidis K."/>
            <person name="Klappenbach J."/>
            <person name="Tiedje J."/>
            <person name="Richardson P."/>
        </authorList>
    </citation>
    <scope>NUCLEOTIDE SEQUENCE [LARGE SCALE GENOMIC DNA]</scope>
    <source>
        <strain>MR-4</strain>
    </source>
</reference>
<accession>Q0HP39</accession>
<organism>
    <name type="scientific">Shewanella sp. (strain MR-4)</name>
    <dbReference type="NCBI Taxonomy" id="60480"/>
    <lineage>
        <taxon>Bacteria</taxon>
        <taxon>Pseudomonadati</taxon>
        <taxon>Pseudomonadota</taxon>
        <taxon>Gammaproteobacteria</taxon>
        <taxon>Alteromonadales</taxon>
        <taxon>Shewanellaceae</taxon>
        <taxon>Shewanella</taxon>
    </lineage>
</organism>
<name>HUTI_SHESM</name>
<keyword id="KW-0963">Cytoplasm</keyword>
<keyword id="KW-0369">Histidine metabolism</keyword>
<keyword id="KW-0378">Hydrolase</keyword>
<keyword id="KW-0408">Iron</keyword>
<keyword id="KW-0479">Metal-binding</keyword>
<keyword id="KW-0862">Zinc</keyword>
<protein>
    <recommendedName>
        <fullName evidence="1">Imidazolonepropionase</fullName>
        <ecNumber evidence="1">3.5.2.7</ecNumber>
    </recommendedName>
    <alternativeName>
        <fullName evidence="1">Imidazolone-5-propionate hydrolase</fullName>
    </alternativeName>
</protein>
<feature type="chain" id="PRO_0000306512" description="Imidazolonepropionase">
    <location>
        <begin position="1"/>
        <end position="408"/>
    </location>
</feature>
<feature type="binding site" evidence="1">
    <location>
        <position position="73"/>
    </location>
    <ligand>
        <name>Fe(3+)</name>
        <dbReference type="ChEBI" id="CHEBI:29034"/>
    </ligand>
</feature>
<feature type="binding site" evidence="1">
    <location>
        <position position="73"/>
    </location>
    <ligand>
        <name>Zn(2+)</name>
        <dbReference type="ChEBI" id="CHEBI:29105"/>
    </ligand>
</feature>
<feature type="binding site" evidence="1">
    <location>
        <position position="75"/>
    </location>
    <ligand>
        <name>Fe(3+)</name>
        <dbReference type="ChEBI" id="CHEBI:29034"/>
    </ligand>
</feature>
<feature type="binding site" evidence="1">
    <location>
        <position position="75"/>
    </location>
    <ligand>
        <name>Zn(2+)</name>
        <dbReference type="ChEBI" id="CHEBI:29105"/>
    </ligand>
</feature>
<feature type="binding site" evidence="1">
    <location>
        <position position="82"/>
    </location>
    <ligand>
        <name>4-imidazolone-5-propanoate</name>
        <dbReference type="ChEBI" id="CHEBI:77893"/>
    </ligand>
</feature>
<feature type="binding site" evidence="1">
    <location>
        <position position="145"/>
    </location>
    <ligand>
        <name>4-imidazolone-5-propanoate</name>
        <dbReference type="ChEBI" id="CHEBI:77893"/>
    </ligand>
</feature>
<feature type="binding site" evidence="1">
    <location>
        <position position="145"/>
    </location>
    <ligand>
        <name>N-formimidoyl-L-glutamate</name>
        <dbReference type="ChEBI" id="CHEBI:58928"/>
    </ligand>
</feature>
<feature type="binding site" evidence="1">
    <location>
        <position position="178"/>
    </location>
    <ligand>
        <name>4-imidazolone-5-propanoate</name>
        <dbReference type="ChEBI" id="CHEBI:77893"/>
    </ligand>
</feature>
<feature type="binding site" evidence="1">
    <location>
        <position position="243"/>
    </location>
    <ligand>
        <name>Fe(3+)</name>
        <dbReference type="ChEBI" id="CHEBI:29034"/>
    </ligand>
</feature>
<feature type="binding site" evidence="1">
    <location>
        <position position="243"/>
    </location>
    <ligand>
        <name>Zn(2+)</name>
        <dbReference type="ChEBI" id="CHEBI:29105"/>
    </ligand>
</feature>
<feature type="binding site" evidence="1">
    <location>
        <position position="246"/>
    </location>
    <ligand>
        <name>4-imidazolone-5-propanoate</name>
        <dbReference type="ChEBI" id="CHEBI:77893"/>
    </ligand>
</feature>
<feature type="binding site" evidence="1">
    <location>
        <position position="318"/>
    </location>
    <ligand>
        <name>Fe(3+)</name>
        <dbReference type="ChEBI" id="CHEBI:29034"/>
    </ligand>
</feature>
<feature type="binding site" evidence="1">
    <location>
        <position position="318"/>
    </location>
    <ligand>
        <name>Zn(2+)</name>
        <dbReference type="ChEBI" id="CHEBI:29105"/>
    </ligand>
</feature>
<feature type="binding site" evidence="1">
    <location>
        <position position="320"/>
    </location>
    <ligand>
        <name>N-formimidoyl-L-glutamate</name>
        <dbReference type="ChEBI" id="CHEBI:58928"/>
    </ligand>
</feature>
<feature type="binding site" evidence="1">
    <location>
        <position position="322"/>
    </location>
    <ligand>
        <name>N-formimidoyl-L-glutamate</name>
        <dbReference type="ChEBI" id="CHEBI:58928"/>
    </ligand>
</feature>
<feature type="binding site" evidence="1">
    <location>
        <position position="323"/>
    </location>
    <ligand>
        <name>4-imidazolone-5-propanoate</name>
        <dbReference type="ChEBI" id="CHEBI:77893"/>
    </ligand>
</feature>
<sequence length="408" mass="43857">MSWDQVWIDVNVATMDPSISAPYGAITNAAIAVKDGKIAWLGPRSELPAFDVLSIPVYRGKGGWITPGLIDAHTHLVFAGNRANEFELRLKGATYEEIARAGGGIISTVNACREADEAELFDLGRQRLNALAKEGVTTVEIKSGYGLDTETELKILRVARELGQHHHVDVKTTFLGAHAVPPEFKDNSDGYVDLIINKMLPAVIAENLADAVDVFCENIAFNLEQTERVLSAAKAAGLQVKLHAEQLSNMGGSELAARLGAKSVDHIEYLDEAGVKALSESGTCAVLLPGAFYFLRETQKPPIDLLRQYGVPMVLASDFNPGSSPICSTLLMLNMGCTLFRLTPEEALAGLTLNAAKALGIEENVGSLVVGKQADFCLWDIATPAQLAYSYGVNPCKDVVKNGKLVHQ</sequence>
<comment type="function">
    <text evidence="1">Catalyzes the hydrolytic cleavage of the carbon-nitrogen bond in imidazolone-5-propanoate to yield N-formimidoyl-L-glutamate. It is the third step in the universal histidine degradation pathway.</text>
</comment>
<comment type="catalytic activity">
    <reaction evidence="1">
        <text>4-imidazolone-5-propanoate + H2O = N-formimidoyl-L-glutamate</text>
        <dbReference type="Rhea" id="RHEA:23660"/>
        <dbReference type="ChEBI" id="CHEBI:15377"/>
        <dbReference type="ChEBI" id="CHEBI:58928"/>
        <dbReference type="ChEBI" id="CHEBI:77893"/>
        <dbReference type="EC" id="3.5.2.7"/>
    </reaction>
</comment>
<comment type="cofactor">
    <cofactor evidence="1">
        <name>Zn(2+)</name>
        <dbReference type="ChEBI" id="CHEBI:29105"/>
    </cofactor>
    <cofactor evidence="1">
        <name>Fe(3+)</name>
        <dbReference type="ChEBI" id="CHEBI:29034"/>
    </cofactor>
    <text evidence="1">Binds 1 zinc or iron ion per subunit.</text>
</comment>
<comment type="pathway">
    <text evidence="1">Amino-acid degradation; L-histidine degradation into L-glutamate; N-formimidoyl-L-glutamate from L-histidine: step 3/3.</text>
</comment>
<comment type="subcellular location">
    <subcellularLocation>
        <location evidence="1">Cytoplasm</location>
    </subcellularLocation>
</comment>
<comment type="similarity">
    <text evidence="1">Belongs to the metallo-dependent hydrolases superfamily. HutI family.</text>
</comment>
<gene>
    <name evidence="1" type="primary">hutI</name>
    <name type="ordered locus">Shewmr4_0097</name>
</gene>
<dbReference type="EC" id="3.5.2.7" evidence="1"/>
<dbReference type="EMBL" id="CP000446">
    <property type="protein sequence ID" value="ABI37178.1"/>
    <property type="molecule type" value="Genomic_DNA"/>
</dbReference>
<dbReference type="RefSeq" id="WP_011620931.1">
    <property type="nucleotide sequence ID" value="NC_008321.1"/>
</dbReference>
<dbReference type="SMR" id="Q0HP39"/>
<dbReference type="KEGG" id="she:Shewmr4_0097"/>
<dbReference type="HOGENOM" id="CLU_041647_0_0_6"/>
<dbReference type="UniPathway" id="UPA00379">
    <property type="reaction ID" value="UER00551"/>
</dbReference>
<dbReference type="GO" id="GO:0005737">
    <property type="term" value="C:cytoplasm"/>
    <property type="evidence" value="ECO:0007669"/>
    <property type="project" value="UniProtKB-SubCell"/>
</dbReference>
<dbReference type="GO" id="GO:0050480">
    <property type="term" value="F:imidazolonepropionase activity"/>
    <property type="evidence" value="ECO:0007669"/>
    <property type="project" value="UniProtKB-UniRule"/>
</dbReference>
<dbReference type="GO" id="GO:0005506">
    <property type="term" value="F:iron ion binding"/>
    <property type="evidence" value="ECO:0007669"/>
    <property type="project" value="UniProtKB-UniRule"/>
</dbReference>
<dbReference type="GO" id="GO:0008270">
    <property type="term" value="F:zinc ion binding"/>
    <property type="evidence" value="ECO:0007669"/>
    <property type="project" value="UniProtKB-UniRule"/>
</dbReference>
<dbReference type="GO" id="GO:0019556">
    <property type="term" value="P:L-histidine catabolic process to glutamate and formamide"/>
    <property type="evidence" value="ECO:0007669"/>
    <property type="project" value="UniProtKB-UniPathway"/>
</dbReference>
<dbReference type="GO" id="GO:0019557">
    <property type="term" value="P:L-histidine catabolic process to glutamate and formate"/>
    <property type="evidence" value="ECO:0007669"/>
    <property type="project" value="UniProtKB-UniPathway"/>
</dbReference>
<dbReference type="CDD" id="cd01296">
    <property type="entry name" value="Imidazolone-5PH"/>
    <property type="match status" value="1"/>
</dbReference>
<dbReference type="FunFam" id="3.20.20.140:FF:000007">
    <property type="entry name" value="Imidazolonepropionase"/>
    <property type="match status" value="1"/>
</dbReference>
<dbReference type="Gene3D" id="3.20.20.140">
    <property type="entry name" value="Metal-dependent hydrolases"/>
    <property type="match status" value="1"/>
</dbReference>
<dbReference type="Gene3D" id="2.30.40.10">
    <property type="entry name" value="Urease, subunit C, domain 1"/>
    <property type="match status" value="1"/>
</dbReference>
<dbReference type="HAMAP" id="MF_00372">
    <property type="entry name" value="HutI"/>
    <property type="match status" value="1"/>
</dbReference>
<dbReference type="InterPro" id="IPR006680">
    <property type="entry name" value="Amidohydro-rel"/>
</dbReference>
<dbReference type="InterPro" id="IPR005920">
    <property type="entry name" value="HutI"/>
</dbReference>
<dbReference type="InterPro" id="IPR011059">
    <property type="entry name" value="Metal-dep_hydrolase_composite"/>
</dbReference>
<dbReference type="InterPro" id="IPR032466">
    <property type="entry name" value="Metal_Hydrolase"/>
</dbReference>
<dbReference type="NCBIfam" id="TIGR01224">
    <property type="entry name" value="hutI"/>
    <property type="match status" value="1"/>
</dbReference>
<dbReference type="PANTHER" id="PTHR42752">
    <property type="entry name" value="IMIDAZOLONEPROPIONASE"/>
    <property type="match status" value="1"/>
</dbReference>
<dbReference type="PANTHER" id="PTHR42752:SF1">
    <property type="entry name" value="IMIDAZOLONEPROPIONASE-RELATED"/>
    <property type="match status" value="1"/>
</dbReference>
<dbReference type="Pfam" id="PF01979">
    <property type="entry name" value="Amidohydro_1"/>
    <property type="match status" value="1"/>
</dbReference>
<dbReference type="SUPFAM" id="SSF51338">
    <property type="entry name" value="Composite domain of metallo-dependent hydrolases"/>
    <property type="match status" value="1"/>
</dbReference>
<dbReference type="SUPFAM" id="SSF51556">
    <property type="entry name" value="Metallo-dependent hydrolases"/>
    <property type="match status" value="1"/>
</dbReference>